<reference key="1">
    <citation type="journal article" date="2002" name="Proc. Natl. Acad. Sci. U.S.A.">
        <title>The complete genome sequence of Chlorobium tepidum TLS, a photosynthetic, anaerobic, green-sulfur bacterium.</title>
        <authorList>
            <person name="Eisen J.A."/>
            <person name="Nelson K.E."/>
            <person name="Paulsen I.T."/>
            <person name="Heidelberg J.F."/>
            <person name="Wu M."/>
            <person name="Dodson R.J."/>
            <person name="DeBoy R.T."/>
            <person name="Gwinn M.L."/>
            <person name="Nelson W.C."/>
            <person name="Haft D.H."/>
            <person name="Hickey E.K."/>
            <person name="Peterson J.D."/>
            <person name="Durkin A.S."/>
            <person name="Kolonay J.F."/>
            <person name="Yang F."/>
            <person name="Holt I.E."/>
            <person name="Umayam L.A."/>
            <person name="Mason T.M."/>
            <person name="Brenner M."/>
            <person name="Shea T.P."/>
            <person name="Parksey D.S."/>
            <person name="Nierman W.C."/>
            <person name="Feldblyum T.V."/>
            <person name="Hansen C.L."/>
            <person name="Craven M.B."/>
            <person name="Radune D."/>
            <person name="Vamathevan J.J."/>
            <person name="Khouri H.M."/>
            <person name="White O."/>
            <person name="Gruber T.M."/>
            <person name="Ketchum K.A."/>
            <person name="Venter J.C."/>
            <person name="Tettelin H."/>
            <person name="Bryant D.A."/>
            <person name="Fraser C.M."/>
        </authorList>
    </citation>
    <scope>NUCLEOTIDE SEQUENCE [LARGE SCALE GENOMIC DNA]</scope>
    <source>
        <strain>ATCC 49652 / DSM 12025 / NBRC 103806 / TLS</strain>
    </source>
</reference>
<dbReference type="EMBL" id="AE006470">
    <property type="protein sequence ID" value="AAM73386.1"/>
    <property type="molecule type" value="Genomic_DNA"/>
</dbReference>
<dbReference type="RefSeq" id="NP_663044.1">
    <property type="nucleotide sequence ID" value="NC_002932.3"/>
</dbReference>
<dbReference type="RefSeq" id="WP_010933823.1">
    <property type="nucleotide sequence ID" value="NC_002932.3"/>
</dbReference>
<dbReference type="SMR" id="Q8KAJ0"/>
<dbReference type="STRING" id="194439.CT2170"/>
<dbReference type="EnsemblBacteria" id="AAM73386">
    <property type="protein sequence ID" value="AAM73386"/>
    <property type="gene ID" value="CT2170"/>
</dbReference>
<dbReference type="KEGG" id="cte:CT2170"/>
<dbReference type="PATRIC" id="fig|194439.7.peg.1969"/>
<dbReference type="eggNOG" id="COG0200">
    <property type="taxonomic scope" value="Bacteria"/>
</dbReference>
<dbReference type="HOGENOM" id="CLU_055188_4_0_10"/>
<dbReference type="OrthoDB" id="9810293at2"/>
<dbReference type="Proteomes" id="UP000001007">
    <property type="component" value="Chromosome"/>
</dbReference>
<dbReference type="GO" id="GO:0022625">
    <property type="term" value="C:cytosolic large ribosomal subunit"/>
    <property type="evidence" value="ECO:0007669"/>
    <property type="project" value="TreeGrafter"/>
</dbReference>
<dbReference type="GO" id="GO:0019843">
    <property type="term" value="F:rRNA binding"/>
    <property type="evidence" value="ECO:0007669"/>
    <property type="project" value="UniProtKB-UniRule"/>
</dbReference>
<dbReference type="GO" id="GO:0003735">
    <property type="term" value="F:structural constituent of ribosome"/>
    <property type="evidence" value="ECO:0007669"/>
    <property type="project" value="InterPro"/>
</dbReference>
<dbReference type="GO" id="GO:0006412">
    <property type="term" value="P:translation"/>
    <property type="evidence" value="ECO:0007669"/>
    <property type="project" value="UniProtKB-UniRule"/>
</dbReference>
<dbReference type="Gene3D" id="3.100.10.10">
    <property type="match status" value="1"/>
</dbReference>
<dbReference type="HAMAP" id="MF_01341">
    <property type="entry name" value="Ribosomal_uL15"/>
    <property type="match status" value="1"/>
</dbReference>
<dbReference type="InterPro" id="IPR030878">
    <property type="entry name" value="Ribosomal_uL15"/>
</dbReference>
<dbReference type="InterPro" id="IPR021131">
    <property type="entry name" value="Ribosomal_uL15/eL18"/>
</dbReference>
<dbReference type="InterPro" id="IPR036227">
    <property type="entry name" value="Ribosomal_uL15/eL18_sf"/>
</dbReference>
<dbReference type="InterPro" id="IPR005749">
    <property type="entry name" value="Ribosomal_uL15_bac-type"/>
</dbReference>
<dbReference type="InterPro" id="IPR001196">
    <property type="entry name" value="Ribosomal_uL15_CS"/>
</dbReference>
<dbReference type="NCBIfam" id="TIGR01071">
    <property type="entry name" value="rplO_bact"/>
    <property type="match status" value="1"/>
</dbReference>
<dbReference type="PANTHER" id="PTHR12934">
    <property type="entry name" value="50S RIBOSOMAL PROTEIN L15"/>
    <property type="match status" value="1"/>
</dbReference>
<dbReference type="PANTHER" id="PTHR12934:SF11">
    <property type="entry name" value="LARGE RIBOSOMAL SUBUNIT PROTEIN UL15M"/>
    <property type="match status" value="1"/>
</dbReference>
<dbReference type="Pfam" id="PF00828">
    <property type="entry name" value="Ribosomal_L27A"/>
    <property type="match status" value="1"/>
</dbReference>
<dbReference type="SUPFAM" id="SSF52080">
    <property type="entry name" value="Ribosomal proteins L15p and L18e"/>
    <property type="match status" value="1"/>
</dbReference>
<dbReference type="PROSITE" id="PS00475">
    <property type="entry name" value="RIBOSOMAL_L15"/>
    <property type="match status" value="1"/>
</dbReference>
<evidence type="ECO:0000255" key="1">
    <source>
        <dbReference type="HAMAP-Rule" id="MF_01341"/>
    </source>
</evidence>
<evidence type="ECO:0000256" key="2">
    <source>
        <dbReference type="SAM" id="MobiDB-lite"/>
    </source>
</evidence>
<evidence type="ECO:0000305" key="3"/>
<sequence length="186" mass="20083">MDLSSLRPAKGAVKARKRVGRGPGSGNGTTAGKGNKGQQSRSGYQRPVIEGGQMPIYRRLPKFGFTPPNQKAVACVNVAQIQMWIEKGLVGEEISVLDLKHLCNASNQEYFKVLGNGELTSTVTITAHFFSKSAEEKIAKAGGKIVKAYRTLEEAAKVNGLPFEEALLTPKAKVVKVKKEKKSVKS</sequence>
<keyword id="KW-1185">Reference proteome</keyword>
<keyword id="KW-0687">Ribonucleoprotein</keyword>
<keyword id="KW-0689">Ribosomal protein</keyword>
<keyword id="KW-0694">RNA-binding</keyword>
<keyword id="KW-0699">rRNA-binding</keyword>
<organism>
    <name type="scientific">Chlorobaculum tepidum (strain ATCC 49652 / DSM 12025 / NBRC 103806 / TLS)</name>
    <name type="common">Chlorobium tepidum</name>
    <dbReference type="NCBI Taxonomy" id="194439"/>
    <lineage>
        <taxon>Bacteria</taxon>
        <taxon>Pseudomonadati</taxon>
        <taxon>Chlorobiota</taxon>
        <taxon>Chlorobiia</taxon>
        <taxon>Chlorobiales</taxon>
        <taxon>Chlorobiaceae</taxon>
        <taxon>Chlorobaculum</taxon>
    </lineage>
</organism>
<gene>
    <name evidence="1" type="primary">rplO</name>
    <name type="ordered locus">CT2170</name>
</gene>
<proteinExistence type="inferred from homology"/>
<name>RL15_CHLTE</name>
<protein>
    <recommendedName>
        <fullName evidence="1">Large ribosomal subunit protein uL15</fullName>
    </recommendedName>
    <alternativeName>
        <fullName evidence="3">50S ribosomal protein L15</fullName>
    </alternativeName>
</protein>
<comment type="function">
    <text evidence="1">Binds to the 23S rRNA.</text>
</comment>
<comment type="subunit">
    <text evidence="1">Part of the 50S ribosomal subunit.</text>
</comment>
<comment type="similarity">
    <text evidence="1">Belongs to the universal ribosomal protein uL15 family.</text>
</comment>
<accession>Q8KAJ0</accession>
<feature type="chain" id="PRO_0000104703" description="Large ribosomal subunit protein uL15">
    <location>
        <begin position="1"/>
        <end position="186"/>
    </location>
</feature>
<feature type="region of interest" description="Disordered" evidence="2">
    <location>
        <begin position="1"/>
        <end position="48"/>
    </location>
</feature>
<feature type="compositionally biased region" description="Gly residues" evidence="2">
    <location>
        <begin position="21"/>
        <end position="35"/>
    </location>
</feature>